<comment type="function">
    <text evidence="1">Involved in the metabolism of galactose. Catalyzes the conversion of UDP-galactose (UDP-Gal) to UDP-glucose (UDP-Glc) through a mechanism involving the transient reduction of NAD (By similarity).</text>
</comment>
<comment type="catalytic activity">
    <reaction>
        <text>UDP-alpha-D-glucose = UDP-alpha-D-galactose</text>
        <dbReference type="Rhea" id="RHEA:22168"/>
        <dbReference type="ChEBI" id="CHEBI:58885"/>
        <dbReference type="ChEBI" id="CHEBI:66914"/>
        <dbReference type="EC" id="5.1.3.2"/>
    </reaction>
</comment>
<comment type="cofactor">
    <cofactor evidence="1">
        <name>NAD(+)</name>
        <dbReference type="ChEBI" id="CHEBI:57540"/>
    </cofactor>
</comment>
<comment type="pathway">
    <text>Carbohydrate metabolism; galactose metabolism.</text>
</comment>
<comment type="subunit">
    <text evidence="1">Homodimer.</text>
</comment>
<comment type="similarity">
    <text evidence="2">Belongs to the NAD(P)-dependent epimerase/dehydratase family.</text>
</comment>
<gene>
    <name type="primary">galE</name>
</gene>
<reference key="1">
    <citation type="journal article" date="1994" name="J. Bacteriol.">
        <title>Genetics of galactose metabolism of Erwinia amylovora and its influence on polysaccharide synthesis and virulence of the fire blight pathogen.</title>
        <authorList>
            <person name="Metzger M."/>
            <person name="Bellemann P."/>
            <person name="Bugert P."/>
            <person name="Geider K."/>
        </authorList>
    </citation>
    <scope>NUCLEOTIDE SEQUENCE [GENOMIC DNA]</scope>
    <source>
        <strain>EA7/74</strain>
    </source>
</reference>
<sequence length="337" mass="36684">MSILVTGGAGYIGSHTVLSLLQRGDDVVILDNLSNASRESINRVEKLTGKTATFFEGDLLDRSCLRSVFSAHRISAVIHFAGLKAVGASTRKPLEYYQNNVTGTLVLLEEMRSAGVNQFIFSSSATVYGADAPVPYVETTPIGGTTSPYGTSKLMVEQILRDYAKANPEFKTIALRYFNPVGAHESGQMGEDPNGIPNNLLPYIAQVAIGRLEKLGIFGDDYPTEDGTGVRDYIHVMDLAEGHLKALDHLSAIEGYKAYNLGAGKGYSVLEMVKAFEKASGGTVAYQISPRRDGDLAAFWADATLADKELNWRVSRGIDEMMRDTWNWQSQNPQGDS</sequence>
<accession>P35673</accession>
<dbReference type="EC" id="5.1.3.2"/>
<dbReference type="EMBL" id="X76172">
    <property type="protein sequence ID" value="CAA53767.1"/>
    <property type="molecule type" value="Genomic_DNA"/>
</dbReference>
<dbReference type="PIR" id="A36951">
    <property type="entry name" value="A36951"/>
</dbReference>
<dbReference type="SMR" id="P35673"/>
<dbReference type="UniPathway" id="UPA00214"/>
<dbReference type="GO" id="GO:0005829">
    <property type="term" value="C:cytosol"/>
    <property type="evidence" value="ECO:0007669"/>
    <property type="project" value="TreeGrafter"/>
</dbReference>
<dbReference type="GO" id="GO:0003978">
    <property type="term" value="F:UDP-glucose 4-epimerase activity"/>
    <property type="evidence" value="ECO:0007669"/>
    <property type="project" value="UniProtKB-EC"/>
</dbReference>
<dbReference type="GO" id="GO:0006012">
    <property type="term" value="P:galactose metabolic process"/>
    <property type="evidence" value="ECO:0007669"/>
    <property type="project" value="UniProtKB-UniPathway"/>
</dbReference>
<dbReference type="CDD" id="cd05247">
    <property type="entry name" value="UDP_G4E_1_SDR_e"/>
    <property type="match status" value="1"/>
</dbReference>
<dbReference type="Gene3D" id="3.40.50.720">
    <property type="entry name" value="NAD(P)-binding Rossmann-like Domain"/>
    <property type="match status" value="1"/>
</dbReference>
<dbReference type="Gene3D" id="3.90.25.10">
    <property type="entry name" value="UDP-galactose 4-epimerase, domain 1"/>
    <property type="match status" value="1"/>
</dbReference>
<dbReference type="InterPro" id="IPR001509">
    <property type="entry name" value="Epimerase_deHydtase"/>
</dbReference>
<dbReference type="InterPro" id="IPR036291">
    <property type="entry name" value="NAD(P)-bd_dom_sf"/>
</dbReference>
<dbReference type="InterPro" id="IPR005886">
    <property type="entry name" value="UDP_G4E"/>
</dbReference>
<dbReference type="NCBIfam" id="TIGR01179">
    <property type="entry name" value="galE"/>
    <property type="match status" value="1"/>
</dbReference>
<dbReference type="NCBIfam" id="NF007956">
    <property type="entry name" value="PRK10675.1"/>
    <property type="match status" value="1"/>
</dbReference>
<dbReference type="PANTHER" id="PTHR43725">
    <property type="entry name" value="UDP-GLUCOSE 4-EPIMERASE"/>
    <property type="match status" value="1"/>
</dbReference>
<dbReference type="PANTHER" id="PTHR43725:SF47">
    <property type="entry name" value="UDP-GLUCOSE 4-EPIMERASE"/>
    <property type="match status" value="1"/>
</dbReference>
<dbReference type="Pfam" id="PF01370">
    <property type="entry name" value="Epimerase"/>
    <property type="match status" value="1"/>
</dbReference>
<dbReference type="SUPFAM" id="SSF51735">
    <property type="entry name" value="NAD(P)-binding Rossmann-fold domains"/>
    <property type="match status" value="1"/>
</dbReference>
<feature type="chain" id="PRO_0000183204" description="UDP-glucose 4-epimerase">
    <location>
        <begin position="1"/>
        <end position="337"/>
    </location>
</feature>
<feature type="active site" description="Proton acceptor" evidence="1">
    <location>
        <position position="149"/>
    </location>
</feature>
<feature type="binding site" evidence="1">
    <location>
        <begin position="11"/>
        <end position="12"/>
    </location>
    <ligand>
        <name>NAD(+)</name>
        <dbReference type="ChEBI" id="CHEBI:57540"/>
    </ligand>
</feature>
<feature type="binding site" evidence="1">
    <location>
        <begin position="31"/>
        <end position="36"/>
    </location>
    <ligand>
        <name>NAD(+)</name>
        <dbReference type="ChEBI" id="CHEBI:57540"/>
    </ligand>
</feature>
<feature type="binding site" evidence="1">
    <location>
        <begin position="58"/>
        <end position="59"/>
    </location>
    <ligand>
        <name>NAD(+)</name>
        <dbReference type="ChEBI" id="CHEBI:57540"/>
    </ligand>
</feature>
<feature type="binding site" evidence="1">
    <location>
        <begin position="80"/>
        <end position="84"/>
    </location>
    <ligand>
        <name>NAD(+)</name>
        <dbReference type="ChEBI" id="CHEBI:57540"/>
    </ligand>
</feature>
<feature type="binding site" evidence="1">
    <location>
        <position position="99"/>
    </location>
    <ligand>
        <name>NAD(+)</name>
        <dbReference type="ChEBI" id="CHEBI:57540"/>
    </ligand>
</feature>
<feature type="binding site" evidence="1">
    <location>
        <position position="124"/>
    </location>
    <ligand>
        <name>NAD(+)</name>
        <dbReference type="ChEBI" id="CHEBI:57540"/>
    </ligand>
</feature>
<feature type="binding site" evidence="1">
    <location>
        <position position="124"/>
    </location>
    <ligand>
        <name>substrate</name>
    </ligand>
</feature>
<feature type="binding site" evidence="1">
    <location>
        <position position="149"/>
    </location>
    <ligand>
        <name>NAD(+)</name>
        <dbReference type="ChEBI" id="CHEBI:57540"/>
    </ligand>
</feature>
<feature type="binding site" evidence="1">
    <location>
        <position position="149"/>
    </location>
    <ligand>
        <name>substrate</name>
    </ligand>
</feature>
<feature type="binding site" evidence="1">
    <location>
        <position position="153"/>
    </location>
    <ligand>
        <name>NAD(+)</name>
        <dbReference type="ChEBI" id="CHEBI:57540"/>
    </ligand>
</feature>
<feature type="binding site" evidence="1">
    <location>
        <position position="178"/>
    </location>
    <ligand>
        <name>NAD(+)</name>
        <dbReference type="ChEBI" id="CHEBI:57540"/>
    </ligand>
</feature>
<feature type="binding site" evidence="1">
    <location>
        <position position="179"/>
    </location>
    <ligand>
        <name>substrate</name>
    </ligand>
</feature>
<feature type="binding site" evidence="1">
    <location>
        <begin position="199"/>
        <end position="200"/>
    </location>
    <ligand>
        <name>substrate</name>
    </ligand>
</feature>
<feature type="binding site" evidence="1">
    <location>
        <begin position="216"/>
        <end position="218"/>
    </location>
    <ligand>
        <name>substrate</name>
    </ligand>
</feature>
<feature type="binding site" evidence="1">
    <location>
        <position position="231"/>
    </location>
    <ligand>
        <name>substrate</name>
    </ligand>
</feature>
<feature type="binding site" evidence="1">
    <location>
        <begin position="292"/>
        <end position="295"/>
    </location>
    <ligand>
        <name>substrate</name>
    </ligand>
</feature>
<evidence type="ECO:0000250" key="1"/>
<evidence type="ECO:0000305" key="2"/>
<organism>
    <name type="scientific">Erwinia amylovora</name>
    <name type="common">Fire blight bacteria</name>
    <dbReference type="NCBI Taxonomy" id="552"/>
    <lineage>
        <taxon>Bacteria</taxon>
        <taxon>Pseudomonadati</taxon>
        <taxon>Pseudomonadota</taxon>
        <taxon>Gammaproteobacteria</taxon>
        <taxon>Enterobacterales</taxon>
        <taxon>Erwiniaceae</taxon>
        <taxon>Erwinia</taxon>
    </lineage>
</organism>
<proteinExistence type="inferred from homology"/>
<protein>
    <recommendedName>
        <fullName>UDP-glucose 4-epimerase</fullName>
        <ecNumber>5.1.3.2</ecNumber>
    </recommendedName>
    <alternativeName>
        <fullName>Galactowaldenase</fullName>
    </alternativeName>
    <alternativeName>
        <fullName>UDP-galactose 4-epimerase</fullName>
    </alternativeName>
</protein>
<keyword id="KW-0119">Carbohydrate metabolism</keyword>
<keyword id="KW-0299">Galactose metabolism</keyword>
<keyword id="KW-0413">Isomerase</keyword>
<keyword id="KW-0520">NAD</keyword>
<name>GALE_ERWAM</name>